<proteinExistence type="inferred from homology"/>
<comment type="function">
    <text evidence="1">Component of the dark-operative protochlorophyllide reductase (DPOR) that uses Mg-ATP and reduced ferredoxin to reduce ring D of protochlorophyllide (Pchlide) to form chlorophyllide a (Chlide). This reaction is light-independent. The L component serves as a unique electron donor to the NB-component of the complex, and binds Mg-ATP.</text>
</comment>
<comment type="catalytic activity">
    <reaction evidence="1">
        <text>chlorophyllide a + oxidized 2[4Fe-4S]-[ferredoxin] + 2 ADP + 2 phosphate = protochlorophyllide a + reduced 2[4Fe-4S]-[ferredoxin] + 2 ATP + 2 H2O</text>
        <dbReference type="Rhea" id="RHEA:28202"/>
        <dbReference type="Rhea" id="RHEA-COMP:10002"/>
        <dbReference type="Rhea" id="RHEA-COMP:10004"/>
        <dbReference type="ChEBI" id="CHEBI:15377"/>
        <dbReference type="ChEBI" id="CHEBI:30616"/>
        <dbReference type="ChEBI" id="CHEBI:33722"/>
        <dbReference type="ChEBI" id="CHEBI:33723"/>
        <dbReference type="ChEBI" id="CHEBI:43474"/>
        <dbReference type="ChEBI" id="CHEBI:83348"/>
        <dbReference type="ChEBI" id="CHEBI:83350"/>
        <dbReference type="ChEBI" id="CHEBI:456216"/>
        <dbReference type="EC" id="1.3.7.7"/>
    </reaction>
</comment>
<comment type="cofactor">
    <cofactor evidence="1">
        <name>[4Fe-4S] cluster</name>
        <dbReference type="ChEBI" id="CHEBI:49883"/>
    </cofactor>
    <text evidence="1">Binds 1 [4Fe-4S] cluster per dimer.</text>
</comment>
<comment type="pathway">
    <text evidence="1">Porphyrin-containing compound metabolism; chlorophyll biosynthesis (light-independent).</text>
</comment>
<comment type="subunit">
    <text evidence="1">Homodimer. Protochlorophyllide reductase is composed of three subunits; ChlL, ChlN and ChlB.</text>
</comment>
<comment type="subcellular location">
    <subcellularLocation>
        <location>Plastid</location>
        <location>Chloroplast</location>
    </subcellularLocation>
</comment>
<comment type="similarity">
    <text evidence="1">Belongs to the NifH/BchL/ChlL family.</text>
</comment>
<evidence type="ECO:0000255" key="1">
    <source>
        <dbReference type="HAMAP-Rule" id="MF_00355"/>
    </source>
</evidence>
<gene>
    <name evidence="1" type="primary">chlL</name>
</gene>
<name>CHLL_MESVI</name>
<keyword id="KW-0004">4Fe-4S</keyword>
<keyword id="KW-0067">ATP-binding</keyword>
<keyword id="KW-0149">Chlorophyll biosynthesis</keyword>
<keyword id="KW-0150">Chloroplast</keyword>
<keyword id="KW-0408">Iron</keyword>
<keyword id="KW-0411">Iron-sulfur</keyword>
<keyword id="KW-0460">Magnesium</keyword>
<keyword id="KW-0479">Metal-binding</keyword>
<keyword id="KW-0547">Nucleotide-binding</keyword>
<keyword id="KW-0560">Oxidoreductase</keyword>
<keyword id="KW-0602">Photosynthesis</keyword>
<keyword id="KW-0934">Plastid</keyword>
<reference key="1">
    <citation type="journal article" date="2000" name="Nature">
        <title>Ancestral chloroplast genome in Mesostigma viride reveals an early branch of green plant evolution.</title>
        <authorList>
            <person name="Lemieux C."/>
            <person name="Otis C."/>
            <person name="Turmel M."/>
        </authorList>
    </citation>
    <scope>NUCLEOTIDE SEQUENCE [LARGE SCALE GENOMIC DNA]</scope>
    <source>
        <strain>NIES-296 / KY-14 / CCMP 2046</strain>
    </source>
</reference>
<organism>
    <name type="scientific">Mesostigma viride</name>
    <name type="common">Green alga</name>
    <dbReference type="NCBI Taxonomy" id="41882"/>
    <lineage>
        <taxon>Eukaryota</taxon>
        <taxon>Viridiplantae</taxon>
        <taxon>Streptophyta</taxon>
        <taxon>Mesostigmatophyceae</taxon>
        <taxon>Mesostigmatales</taxon>
        <taxon>Mesostigmataceae</taxon>
        <taxon>Mesostigma</taxon>
    </lineage>
</organism>
<sequence>MKIAVYGKGGIGKSTTSCNISIALARRGKKVLQIGCDPKHDSTFTLTGFLIPTIIDTLQSKDYHYEDVWPEDVIYKGYGGVDCVEAGGPPAGAGCGGYVVGETVKLLKELNAFYEYDVILFDVLGDVVCGGFAAPLNYADYCIIITDNGFDALFAANRIAASVREKARTHPLRLAGLVGNRTSKRDLIDKYVEACPMPVLEVLPLIEDIRVSRVKGKTLFEMVETEKSLNYVCEFYLNIADQLLARPEGVVPNEVPDRELFSLLSDFYLNPVNTSNESTNSSIEANQEVESSFLII</sequence>
<geneLocation type="chloroplast"/>
<protein>
    <recommendedName>
        <fullName evidence="1">Light-independent protochlorophyllide reductase iron-sulfur ATP-binding protein</fullName>
        <shortName evidence="1">DPOR subunit L</shortName>
        <shortName evidence="1">LI-POR subunit L</shortName>
        <ecNumber evidence="1">1.3.7.7</ecNumber>
    </recommendedName>
</protein>
<feature type="chain" id="PRO_0000139560" description="Light-independent protochlorophyllide reductase iron-sulfur ATP-binding protein">
    <location>
        <begin position="1"/>
        <end position="296"/>
    </location>
</feature>
<feature type="binding site" evidence="1">
    <location>
        <begin position="10"/>
        <end position="15"/>
    </location>
    <ligand>
        <name>ATP</name>
        <dbReference type="ChEBI" id="CHEBI:30616"/>
    </ligand>
</feature>
<feature type="binding site" evidence="1">
    <location>
        <position position="14"/>
    </location>
    <ligand>
        <name>Mg(2+)</name>
        <dbReference type="ChEBI" id="CHEBI:18420"/>
    </ligand>
</feature>
<feature type="binding site" evidence="1">
    <location>
        <position position="39"/>
    </location>
    <ligand>
        <name>ATP</name>
        <dbReference type="ChEBI" id="CHEBI:30616"/>
    </ligand>
</feature>
<feature type="binding site" evidence="1">
    <location>
        <position position="95"/>
    </location>
    <ligand>
        <name>[4Fe-4S] cluster</name>
        <dbReference type="ChEBI" id="CHEBI:49883"/>
        <note>ligand shared between dimeric partners</note>
    </ligand>
</feature>
<feature type="binding site" evidence="1">
    <location>
        <position position="129"/>
    </location>
    <ligand>
        <name>[4Fe-4S] cluster</name>
        <dbReference type="ChEBI" id="CHEBI:49883"/>
        <note>ligand shared between dimeric partners</note>
    </ligand>
</feature>
<feature type="binding site" evidence="1">
    <location>
        <begin position="180"/>
        <end position="181"/>
    </location>
    <ligand>
        <name>ATP</name>
        <dbReference type="ChEBI" id="CHEBI:30616"/>
    </ligand>
</feature>
<accession>Q9MUM2</accession>
<dbReference type="EC" id="1.3.7.7" evidence="1"/>
<dbReference type="EMBL" id="AF166114">
    <property type="protein sequence ID" value="AAF43876.1"/>
    <property type="molecule type" value="Genomic_DNA"/>
</dbReference>
<dbReference type="RefSeq" id="NP_038438.1">
    <property type="nucleotide sequence ID" value="NC_002186.1"/>
</dbReference>
<dbReference type="SMR" id="Q9MUM2"/>
<dbReference type="GeneID" id="800991"/>
<dbReference type="UniPathway" id="UPA00670"/>
<dbReference type="GO" id="GO:0009507">
    <property type="term" value="C:chloroplast"/>
    <property type="evidence" value="ECO:0007669"/>
    <property type="project" value="UniProtKB-SubCell"/>
</dbReference>
<dbReference type="GO" id="GO:0051539">
    <property type="term" value="F:4 iron, 4 sulfur cluster binding"/>
    <property type="evidence" value="ECO:0007669"/>
    <property type="project" value="UniProtKB-UniRule"/>
</dbReference>
<dbReference type="GO" id="GO:0005524">
    <property type="term" value="F:ATP binding"/>
    <property type="evidence" value="ECO:0007669"/>
    <property type="project" value="UniProtKB-UniRule"/>
</dbReference>
<dbReference type="GO" id="GO:0046872">
    <property type="term" value="F:metal ion binding"/>
    <property type="evidence" value="ECO:0007669"/>
    <property type="project" value="UniProtKB-KW"/>
</dbReference>
<dbReference type="GO" id="GO:0016730">
    <property type="term" value="F:oxidoreductase activity, acting on iron-sulfur proteins as donors"/>
    <property type="evidence" value="ECO:0007669"/>
    <property type="project" value="InterPro"/>
</dbReference>
<dbReference type="GO" id="GO:0016636">
    <property type="term" value="F:oxidoreductase activity, acting on the CH-CH group of donors, iron-sulfur protein as acceptor"/>
    <property type="evidence" value="ECO:0007669"/>
    <property type="project" value="UniProtKB-UniRule"/>
</dbReference>
<dbReference type="GO" id="GO:0036068">
    <property type="term" value="P:light-independent chlorophyll biosynthetic process"/>
    <property type="evidence" value="ECO:0007669"/>
    <property type="project" value="UniProtKB-UniRule"/>
</dbReference>
<dbReference type="GO" id="GO:0019685">
    <property type="term" value="P:photosynthesis, dark reaction"/>
    <property type="evidence" value="ECO:0007669"/>
    <property type="project" value="InterPro"/>
</dbReference>
<dbReference type="CDD" id="cd02032">
    <property type="entry name" value="Bchl-like"/>
    <property type="match status" value="1"/>
</dbReference>
<dbReference type="Gene3D" id="3.40.50.300">
    <property type="entry name" value="P-loop containing nucleotide triphosphate hydrolases"/>
    <property type="match status" value="1"/>
</dbReference>
<dbReference type="HAMAP" id="MF_00355">
    <property type="entry name" value="ChlL_BchL"/>
    <property type="match status" value="1"/>
</dbReference>
<dbReference type="InterPro" id="IPR030655">
    <property type="entry name" value="NifH/chlL_CS"/>
</dbReference>
<dbReference type="InterPro" id="IPR000392">
    <property type="entry name" value="NifH/frxC"/>
</dbReference>
<dbReference type="InterPro" id="IPR027417">
    <property type="entry name" value="P-loop_NTPase"/>
</dbReference>
<dbReference type="InterPro" id="IPR005971">
    <property type="entry name" value="Protochlorophyllide_ATP-bd"/>
</dbReference>
<dbReference type="NCBIfam" id="TIGR01281">
    <property type="entry name" value="DPOR_bchL"/>
    <property type="match status" value="1"/>
</dbReference>
<dbReference type="PANTHER" id="PTHR42864">
    <property type="entry name" value="LIGHT-INDEPENDENT PROTOCHLOROPHYLLIDE REDUCTASE IRON-SULFUR ATP-BINDING PROTEIN"/>
    <property type="match status" value="1"/>
</dbReference>
<dbReference type="PANTHER" id="PTHR42864:SF2">
    <property type="entry name" value="LIGHT-INDEPENDENT PROTOCHLOROPHYLLIDE REDUCTASE IRON-SULFUR ATP-BINDING PROTEIN"/>
    <property type="match status" value="1"/>
</dbReference>
<dbReference type="Pfam" id="PF00142">
    <property type="entry name" value="Fer4_NifH"/>
    <property type="match status" value="1"/>
</dbReference>
<dbReference type="PIRSF" id="PIRSF000363">
    <property type="entry name" value="Nitrogenase_iron"/>
    <property type="match status" value="1"/>
</dbReference>
<dbReference type="PRINTS" id="PR00091">
    <property type="entry name" value="NITROGNASEII"/>
</dbReference>
<dbReference type="SUPFAM" id="SSF52540">
    <property type="entry name" value="P-loop containing nucleoside triphosphate hydrolases"/>
    <property type="match status" value="1"/>
</dbReference>
<dbReference type="PROSITE" id="PS00746">
    <property type="entry name" value="NIFH_FRXC_1"/>
    <property type="match status" value="1"/>
</dbReference>
<dbReference type="PROSITE" id="PS00692">
    <property type="entry name" value="NIFH_FRXC_2"/>
    <property type="match status" value="1"/>
</dbReference>
<dbReference type="PROSITE" id="PS51026">
    <property type="entry name" value="NIFH_FRXC_3"/>
    <property type="match status" value="1"/>
</dbReference>